<name>RN150_DANRE</name>
<gene>
    <name type="primary">rnf150</name>
    <name type="ORF">zgc:92168</name>
</gene>
<organism>
    <name type="scientific">Danio rerio</name>
    <name type="common">Zebrafish</name>
    <name type="synonym">Brachydanio rerio</name>
    <dbReference type="NCBI Taxonomy" id="7955"/>
    <lineage>
        <taxon>Eukaryota</taxon>
        <taxon>Metazoa</taxon>
        <taxon>Chordata</taxon>
        <taxon>Craniata</taxon>
        <taxon>Vertebrata</taxon>
        <taxon>Euteleostomi</taxon>
        <taxon>Actinopterygii</taxon>
        <taxon>Neopterygii</taxon>
        <taxon>Teleostei</taxon>
        <taxon>Ostariophysi</taxon>
        <taxon>Cypriniformes</taxon>
        <taxon>Danionidae</taxon>
        <taxon>Danioninae</taxon>
        <taxon>Danio</taxon>
    </lineage>
</organism>
<evidence type="ECO:0000255" key="1"/>
<evidence type="ECO:0000255" key="2">
    <source>
        <dbReference type="PROSITE-ProRule" id="PRU00175"/>
    </source>
</evidence>
<evidence type="ECO:0000256" key="3">
    <source>
        <dbReference type="SAM" id="MobiDB-lite"/>
    </source>
</evidence>
<evidence type="ECO:0000305" key="4"/>
<accession>Q566M8</accession>
<comment type="subcellular location">
    <subcellularLocation>
        <location evidence="4">Membrane</location>
        <topology evidence="4">Single-pass type I membrane protein</topology>
    </subcellularLocation>
</comment>
<dbReference type="EMBL" id="BC093448">
    <property type="protein sequence ID" value="AAH93448.1"/>
    <property type="molecule type" value="mRNA"/>
</dbReference>
<dbReference type="RefSeq" id="NP_001017554.1">
    <property type="nucleotide sequence ID" value="NM_001017554.2"/>
</dbReference>
<dbReference type="SMR" id="Q566M8"/>
<dbReference type="FunCoup" id="Q566M8">
    <property type="interactions" value="145"/>
</dbReference>
<dbReference type="STRING" id="7955.ENSDARP00000013248"/>
<dbReference type="PaxDb" id="7955-ENSDARP00000013248"/>
<dbReference type="Ensembl" id="ENSDART00000024313">
    <property type="protein sequence ID" value="ENSDARP00000013248"/>
    <property type="gene ID" value="ENSDARG00000009524"/>
</dbReference>
<dbReference type="GeneID" id="792211"/>
<dbReference type="KEGG" id="dre:792211"/>
<dbReference type="AGR" id="ZFIN:ZDB-GENE-050417-470"/>
<dbReference type="CTD" id="792211"/>
<dbReference type="ZFIN" id="ZDB-GENE-050417-470">
    <property type="gene designation" value="rnf150b"/>
</dbReference>
<dbReference type="eggNOG" id="KOG0800">
    <property type="taxonomic scope" value="Eukaryota"/>
</dbReference>
<dbReference type="HOGENOM" id="CLU_049885_2_1_1"/>
<dbReference type="InParanoid" id="Q566M8"/>
<dbReference type="OMA" id="HERRACD"/>
<dbReference type="OrthoDB" id="5357315at2759"/>
<dbReference type="PhylomeDB" id="Q566M8"/>
<dbReference type="TreeFam" id="TF317486"/>
<dbReference type="PRO" id="PR:Q566M8"/>
<dbReference type="Proteomes" id="UP000000437">
    <property type="component" value="Chromosome 23"/>
</dbReference>
<dbReference type="Bgee" id="ENSDARG00000009524">
    <property type="expression patterns" value="Expressed in mature ovarian follicle and 20 other cell types or tissues"/>
</dbReference>
<dbReference type="GO" id="GO:0005737">
    <property type="term" value="C:cytoplasm"/>
    <property type="evidence" value="ECO:0000318"/>
    <property type="project" value="GO_Central"/>
</dbReference>
<dbReference type="GO" id="GO:0016020">
    <property type="term" value="C:membrane"/>
    <property type="evidence" value="ECO:0007669"/>
    <property type="project" value="UniProtKB-SubCell"/>
</dbReference>
<dbReference type="GO" id="GO:0061630">
    <property type="term" value="F:ubiquitin protein ligase activity"/>
    <property type="evidence" value="ECO:0000318"/>
    <property type="project" value="GO_Central"/>
</dbReference>
<dbReference type="GO" id="GO:0008270">
    <property type="term" value="F:zinc ion binding"/>
    <property type="evidence" value="ECO:0007669"/>
    <property type="project" value="UniProtKB-KW"/>
</dbReference>
<dbReference type="GO" id="GO:0006511">
    <property type="term" value="P:ubiquitin-dependent protein catabolic process"/>
    <property type="evidence" value="ECO:0000318"/>
    <property type="project" value="GO_Central"/>
</dbReference>
<dbReference type="CDD" id="cd02122">
    <property type="entry name" value="PA_GRAIL_like"/>
    <property type="match status" value="1"/>
</dbReference>
<dbReference type="CDD" id="cd16805">
    <property type="entry name" value="RING-H2_RNF150"/>
    <property type="match status" value="1"/>
</dbReference>
<dbReference type="FunFam" id="3.30.40.10:FF:000009">
    <property type="entry name" value="E3 ubiquitin-protein ligase RNF130"/>
    <property type="match status" value="1"/>
</dbReference>
<dbReference type="FunFam" id="3.50.30.30:FF:000016">
    <property type="entry name" value="Ring finger protein 150"/>
    <property type="match status" value="1"/>
</dbReference>
<dbReference type="Gene3D" id="3.50.30.30">
    <property type="match status" value="1"/>
</dbReference>
<dbReference type="Gene3D" id="3.30.40.10">
    <property type="entry name" value="Zinc/RING finger domain, C3HC4 (zinc finger)"/>
    <property type="match status" value="1"/>
</dbReference>
<dbReference type="InterPro" id="IPR046450">
    <property type="entry name" value="PA_dom_sf"/>
</dbReference>
<dbReference type="InterPro" id="IPR003137">
    <property type="entry name" value="PA_domain"/>
</dbReference>
<dbReference type="InterPro" id="IPR001841">
    <property type="entry name" value="Znf_RING"/>
</dbReference>
<dbReference type="InterPro" id="IPR013083">
    <property type="entry name" value="Znf_RING/FYVE/PHD"/>
</dbReference>
<dbReference type="PANTHER" id="PTHR46539">
    <property type="entry name" value="E3 UBIQUITIN-PROTEIN LIGASE ATL42"/>
    <property type="match status" value="1"/>
</dbReference>
<dbReference type="PANTHER" id="PTHR46539:SF27">
    <property type="entry name" value="RING FINGER PROTEIN 128"/>
    <property type="match status" value="1"/>
</dbReference>
<dbReference type="Pfam" id="PF02225">
    <property type="entry name" value="PA"/>
    <property type="match status" value="1"/>
</dbReference>
<dbReference type="Pfam" id="PF13639">
    <property type="entry name" value="zf-RING_2"/>
    <property type="match status" value="1"/>
</dbReference>
<dbReference type="SMART" id="SM00184">
    <property type="entry name" value="RING"/>
    <property type="match status" value="1"/>
</dbReference>
<dbReference type="SUPFAM" id="SSF52025">
    <property type="entry name" value="PA domain"/>
    <property type="match status" value="1"/>
</dbReference>
<dbReference type="SUPFAM" id="SSF57850">
    <property type="entry name" value="RING/U-box"/>
    <property type="match status" value="1"/>
</dbReference>
<dbReference type="PROSITE" id="PS50089">
    <property type="entry name" value="ZF_RING_2"/>
    <property type="match status" value="1"/>
</dbReference>
<protein>
    <recommendedName>
        <fullName>RING finger protein 150</fullName>
    </recommendedName>
</protein>
<proteinExistence type="evidence at transcript level"/>
<keyword id="KW-0472">Membrane</keyword>
<keyword id="KW-0479">Metal-binding</keyword>
<keyword id="KW-1185">Reference proteome</keyword>
<keyword id="KW-0732">Signal</keyword>
<keyword id="KW-0812">Transmembrane</keyword>
<keyword id="KW-1133">Transmembrane helix</keyword>
<keyword id="KW-0862">Zinc</keyword>
<keyword id="KW-0863">Zinc-finger</keyword>
<sequence length="419" mass="46350">MALSVIQACRSLALSTWLLSFCFVHLLCLDFTVAEKEEWYTAFVNITYVDPDTAEVRTEKTECGRYGEHSLKREARGVLAMPAAPHDRHACDPSGRFTPRAHGAWIALISRGNCTYKDKIRHAVGHNASAVVIFNVGSSNPNETITMPHQGISDVVAIMIPEPKGRELVLLMERNITVHMHITIGTRNLQKYVSRTSVVFVSISFIILMIISLAWLVFYYIQRFRYANARDRNQRRLGDAAKKAISQLQVRTIRKGDQETESDFDNCAVCIEGYKPNDVVRILPCRHLFHKCCVDPWLVDHRTCPMCKMNILKALGLTSSAECLNELPLDYELAVGGVALNAMVMSDDVMAGDVGGARDPGVRMGGLPQVLLDSEPLSQDTMPTEQSELQPIASGSSDVSLTTGAGHSDIDTPTDDPKC</sequence>
<feature type="signal peptide" evidence="1">
    <location>
        <begin position="1"/>
        <end position="34"/>
    </location>
</feature>
<feature type="chain" id="PRO_0000280699" description="RING finger protein 150">
    <location>
        <begin position="35"/>
        <end position="419"/>
    </location>
</feature>
<feature type="topological domain" description="Extracellular" evidence="1">
    <location>
        <begin position="35"/>
        <end position="197"/>
    </location>
</feature>
<feature type="transmembrane region" description="Helical" evidence="1">
    <location>
        <begin position="198"/>
        <end position="218"/>
    </location>
</feature>
<feature type="topological domain" description="Cytoplasmic" evidence="1">
    <location>
        <begin position="219"/>
        <end position="419"/>
    </location>
</feature>
<feature type="domain" description="PA">
    <location>
        <begin position="70"/>
        <end position="172"/>
    </location>
</feature>
<feature type="zinc finger region" description="RING-type; atypical" evidence="2">
    <location>
        <begin position="267"/>
        <end position="308"/>
    </location>
</feature>
<feature type="region of interest" description="Disordered" evidence="3">
    <location>
        <begin position="374"/>
        <end position="419"/>
    </location>
</feature>
<feature type="compositionally biased region" description="Polar residues" evidence="3">
    <location>
        <begin position="376"/>
        <end position="405"/>
    </location>
</feature>
<reference key="1">
    <citation type="submission" date="2005-04" db="EMBL/GenBank/DDBJ databases">
        <authorList>
            <consortium name="NIH - Zebrafish Gene Collection (ZGC) project"/>
        </authorList>
    </citation>
    <scope>NUCLEOTIDE SEQUENCE [LARGE SCALE MRNA]</scope>
</reference>